<keyword id="KW-0004">4Fe-4S</keyword>
<keyword id="KW-0007">Acetylation</keyword>
<keyword id="KW-0903">Direct protein sequencing</keyword>
<keyword id="KW-0225">Disease variant</keyword>
<keyword id="KW-0408">Iron</keyword>
<keyword id="KW-0411">Iron-sulfur</keyword>
<keyword id="KW-0456">Lyase</keyword>
<keyword id="KW-0479">Metal-binding</keyword>
<keyword id="KW-0496">Mitochondrion</keyword>
<keyword id="KW-0523">Neurodegeneration</keyword>
<keyword id="KW-0597">Phosphoprotein</keyword>
<keyword id="KW-1267">Proteomics identification</keyword>
<keyword id="KW-1185">Reference proteome</keyword>
<keyword id="KW-0809">Transit peptide</keyword>
<keyword id="KW-0816">Tricarboxylic acid cycle</keyword>
<proteinExistence type="evidence at protein level"/>
<comment type="function">
    <text evidence="2">Catalyzes the isomerization of citrate to isocitrate via cis-aconitate.</text>
</comment>
<comment type="catalytic activity">
    <reaction evidence="2">
        <text>citrate = D-threo-isocitrate</text>
        <dbReference type="Rhea" id="RHEA:10336"/>
        <dbReference type="ChEBI" id="CHEBI:15562"/>
        <dbReference type="ChEBI" id="CHEBI:16947"/>
        <dbReference type="EC" id="4.2.1.3"/>
    </reaction>
</comment>
<comment type="cofactor">
    <cofactor evidence="2">
        <name>[4Fe-4S] cluster</name>
        <dbReference type="ChEBI" id="CHEBI:49883"/>
    </cofactor>
    <text evidence="2">Binds 1 [4Fe-4S] cluster per subunit. Binding of a [3Fe-4S] cluster leads to an inactive enzyme.</text>
</comment>
<comment type="pathway">
    <text>Carbohydrate metabolism; tricarboxylic acid cycle; isocitrate from oxaloacetate: step 2/2.</text>
</comment>
<comment type="subunit">
    <text evidence="2">Monomer.</text>
</comment>
<comment type="subcellular location">
    <subcellularLocation>
        <location evidence="2">Mitochondrion</location>
    </subcellularLocation>
</comment>
<comment type="PTM">
    <text evidence="4">Forms covalent cross-links mediated by transglutaminase TGM2, between a glutamine and the epsilon-amino group of a lysine residue, forming homopolymers and heteropolymers.</text>
</comment>
<comment type="disease" evidence="7 8">
    <disease id="DI-03409">
        <name>Infantile cerebellar-retinal degeneration</name>
        <acronym>ICRD</acronym>
        <description>A severe autosomal recessive neurodegenerative disorder characterized by onset between ages 2 and 6 months of truncal hypotonia, athetosis, seizures, and ophthalmologic abnormalities, particularly optic atrophy and retinal degeneration. Affected individuals show profound psychomotor retardation, with only some achieving rolling, sitting, or recognition of family. Brain MRI shows progressive cerebral and cerebellar degeneration.</description>
        <dbReference type="MIM" id="614559"/>
    </disease>
    <text>The disease is caused by variants affecting the gene represented in this entry.</text>
</comment>
<comment type="disease" evidence="8">
    <disease id="DI-04381">
        <name>Optic atrophy 9</name>
        <acronym>OPA9</acronym>
        <description>A condition that features progressive visual loss in association with optic atrophy. Atrophy of the optic disk indicates a deficiency in the number of nerve fibers which arise in the retina and converge to form the optic disk, optic nerve, optic chiasm and optic tracts.</description>
        <dbReference type="MIM" id="616289"/>
    </disease>
    <text>The disease is caused by variants affecting the gene represented in this entry.</text>
</comment>
<comment type="similarity">
    <text evidence="9">Belongs to the aconitase/IPM isomerase family.</text>
</comment>
<comment type="online information" name="Wikipedia">
    <link uri="https://en.wikipedia.org/wiki/Aconitase"/>
    <text>Aconitase entry</text>
</comment>
<organism>
    <name type="scientific">Homo sapiens</name>
    <name type="common">Human</name>
    <dbReference type="NCBI Taxonomy" id="9606"/>
    <lineage>
        <taxon>Eukaryota</taxon>
        <taxon>Metazoa</taxon>
        <taxon>Chordata</taxon>
        <taxon>Craniata</taxon>
        <taxon>Vertebrata</taxon>
        <taxon>Euteleostomi</taxon>
        <taxon>Mammalia</taxon>
        <taxon>Eutheria</taxon>
        <taxon>Euarchontoglires</taxon>
        <taxon>Primates</taxon>
        <taxon>Haplorrhini</taxon>
        <taxon>Catarrhini</taxon>
        <taxon>Hominidae</taxon>
        <taxon>Homo</taxon>
    </lineage>
</organism>
<evidence type="ECO:0000250" key="1"/>
<evidence type="ECO:0000250" key="2">
    <source>
        <dbReference type="UniProtKB" id="P16276"/>
    </source>
</evidence>
<evidence type="ECO:0000250" key="3">
    <source>
        <dbReference type="UniProtKB" id="Q99KI0"/>
    </source>
</evidence>
<evidence type="ECO:0000250" key="4">
    <source>
        <dbReference type="UniProtKB" id="Q9ER34"/>
    </source>
</evidence>
<evidence type="ECO:0000256" key="5">
    <source>
        <dbReference type="SAM" id="MobiDB-lite"/>
    </source>
</evidence>
<evidence type="ECO:0000269" key="6">
    <source>
    </source>
</evidence>
<evidence type="ECO:0000269" key="7">
    <source>
    </source>
</evidence>
<evidence type="ECO:0000269" key="8">
    <source>
    </source>
</evidence>
<evidence type="ECO:0000305" key="9"/>
<evidence type="ECO:0007744" key="10">
    <source>
    </source>
</evidence>
<evidence type="ECO:0007744" key="11">
    <source>
    </source>
</evidence>
<evidence type="ECO:0007744" key="12">
    <source>
    </source>
</evidence>
<accession>Q99798</accession>
<accession>O75809</accession>
<accession>Q5JZ41</accession>
<accession>Q6FHX0</accession>
<accession>Q8TAQ6</accession>
<dbReference type="EC" id="4.2.1.3" evidence="2"/>
<dbReference type="EMBL" id="U80040">
    <property type="protein sequence ID" value="AAB38416.1"/>
    <property type="molecule type" value="mRNA"/>
</dbReference>
<dbReference type="EMBL" id="U87939">
    <property type="protein sequence ID" value="AAC39921.1"/>
    <property type="molecule type" value="Genomic_DNA"/>
</dbReference>
<dbReference type="EMBL" id="U87926">
    <property type="protein sequence ID" value="AAC39921.1"/>
    <property type="status" value="JOINED"/>
    <property type="molecule type" value="Genomic_DNA"/>
</dbReference>
<dbReference type="EMBL" id="U87927">
    <property type="protein sequence ID" value="AAC39921.1"/>
    <property type="status" value="JOINED"/>
    <property type="molecule type" value="Genomic_DNA"/>
</dbReference>
<dbReference type="EMBL" id="U87928">
    <property type="protein sequence ID" value="AAC39921.1"/>
    <property type="status" value="JOINED"/>
    <property type="molecule type" value="Genomic_DNA"/>
</dbReference>
<dbReference type="EMBL" id="U87929">
    <property type="protein sequence ID" value="AAC39921.1"/>
    <property type="status" value="JOINED"/>
    <property type="molecule type" value="Genomic_DNA"/>
</dbReference>
<dbReference type="EMBL" id="U87930">
    <property type="protein sequence ID" value="AAC39921.1"/>
    <property type="status" value="JOINED"/>
    <property type="molecule type" value="Genomic_DNA"/>
</dbReference>
<dbReference type="EMBL" id="U87931">
    <property type="protein sequence ID" value="AAC39921.1"/>
    <property type="status" value="JOINED"/>
    <property type="molecule type" value="Genomic_DNA"/>
</dbReference>
<dbReference type="EMBL" id="U87932">
    <property type="protein sequence ID" value="AAC39921.1"/>
    <property type="status" value="JOINED"/>
    <property type="molecule type" value="Genomic_DNA"/>
</dbReference>
<dbReference type="EMBL" id="U87933">
    <property type="protein sequence ID" value="AAC39921.1"/>
    <property type="status" value="JOINED"/>
    <property type="molecule type" value="Genomic_DNA"/>
</dbReference>
<dbReference type="EMBL" id="U87934">
    <property type="protein sequence ID" value="AAC39921.1"/>
    <property type="status" value="JOINED"/>
    <property type="molecule type" value="Genomic_DNA"/>
</dbReference>
<dbReference type="EMBL" id="U87935">
    <property type="protein sequence ID" value="AAC39921.1"/>
    <property type="status" value="JOINED"/>
    <property type="molecule type" value="Genomic_DNA"/>
</dbReference>
<dbReference type="EMBL" id="U87936">
    <property type="protein sequence ID" value="AAC39921.1"/>
    <property type="status" value="JOINED"/>
    <property type="molecule type" value="Genomic_DNA"/>
</dbReference>
<dbReference type="EMBL" id="U87937">
    <property type="protein sequence ID" value="AAC39921.1"/>
    <property type="status" value="JOINED"/>
    <property type="molecule type" value="Genomic_DNA"/>
</dbReference>
<dbReference type="EMBL" id="U87938">
    <property type="protein sequence ID" value="AAC39921.1"/>
    <property type="status" value="JOINED"/>
    <property type="molecule type" value="Genomic_DNA"/>
</dbReference>
<dbReference type="EMBL" id="CR456365">
    <property type="protein sequence ID" value="CAG30251.1"/>
    <property type="molecule type" value="mRNA"/>
</dbReference>
<dbReference type="EMBL" id="CR536568">
    <property type="protein sequence ID" value="CAG38805.1"/>
    <property type="molecule type" value="mRNA"/>
</dbReference>
<dbReference type="EMBL" id="AL023553">
    <property type="status" value="NOT_ANNOTATED_CDS"/>
    <property type="molecule type" value="Genomic_DNA"/>
</dbReference>
<dbReference type="EMBL" id="AL008582">
    <property type="status" value="NOT_ANNOTATED_CDS"/>
    <property type="molecule type" value="Genomic_DNA"/>
</dbReference>
<dbReference type="EMBL" id="BC014092">
    <property type="protein sequence ID" value="AAH14092.1"/>
    <property type="molecule type" value="mRNA"/>
</dbReference>
<dbReference type="EMBL" id="BC026196">
    <property type="protein sequence ID" value="AAH26196.1"/>
    <property type="molecule type" value="mRNA"/>
</dbReference>
<dbReference type="CCDS" id="CCDS14017.1"/>
<dbReference type="PIR" id="S17526">
    <property type="entry name" value="S17526"/>
</dbReference>
<dbReference type="PIR" id="T52543">
    <property type="entry name" value="T52543"/>
</dbReference>
<dbReference type="RefSeq" id="NP_001089.1">
    <property type="nucleotide sequence ID" value="NM_001098.3"/>
</dbReference>
<dbReference type="RefSeq" id="XP_054181635.1">
    <property type="nucleotide sequence ID" value="XM_054325660.1"/>
</dbReference>
<dbReference type="SMR" id="Q99798"/>
<dbReference type="BioGRID" id="106566">
    <property type="interactions" value="224"/>
</dbReference>
<dbReference type="FunCoup" id="Q99798">
    <property type="interactions" value="2013"/>
</dbReference>
<dbReference type="IntAct" id="Q99798">
    <property type="interactions" value="21"/>
</dbReference>
<dbReference type="MINT" id="Q99798"/>
<dbReference type="STRING" id="9606.ENSP00000216254"/>
<dbReference type="DrugBank" id="DB03964">
    <property type="generic name" value="4-Hydroxy-Aconitate Ion"/>
</dbReference>
<dbReference type="DrugBank" id="DB04351">
    <property type="generic name" value="Aconitate Ion"/>
</dbReference>
<dbReference type="DrugBank" id="DB04072">
    <property type="generic name" value="Alpha-Methylisocitric Acid"/>
</dbReference>
<dbReference type="DrugBank" id="DB01727">
    <property type="generic name" value="Isocitric Acid"/>
</dbReference>
<dbReference type="DrugBank" id="DB04562">
    <property type="generic name" value="Tricarballylic acid"/>
</dbReference>
<dbReference type="CarbonylDB" id="Q99798"/>
<dbReference type="GlyCosmos" id="Q99798">
    <property type="glycosylation" value="1 site, 1 glycan"/>
</dbReference>
<dbReference type="GlyGen" id="Q99798">
    <property type="glycosylation" value="4 sites, 2 N-linked glycans (2 sites), 1 O-linked glycan (1 site)"/>
</dbReference>
<dbReference type="iPTMnet" id="Q99798"/>
<dbReference type="PhosphoSitePlus" id="Q99798"/>
<dbReference type="SwissPalm" id="Q99798"/>
<dbReference type="BioMuta" id="ACO2"/>
<dbReference type="DMDM" id="6686275"/>
<dbReference type="REPRODUCTION-2DPAGE" id="IPI00017855"/>
<dbReference type="REPRODUCTION-2DPAGE" id="Q99798"/>
<dbReference type="CPTAC" id="CPTAC-2717"/>
<dbReference type="jPOST" id="Q99798"/>
<dbReference type="MassIVE" id="Q99798"/>
<dbReference type="PaxDb" id="9606-ENSP00000216254"/>
<dbReference type="PeptideAtlas" id="Q99798"/>
<dbReference type="ProteomicsDB" id="78478"/>
<dbReference type="Pumba" id="Q99798"/>
<dbReference type="Antibodypedia" id="240">
    <property type="antibodies" value="526 antibodies from 39 providers"/>
</dbReference>
<dbReference type="DNASU" id="50"/>
<dbReference type="Ensembl" id="ENST00000216254.9">
    <property type="protein sequence ID" value="ENSP00000216254.4"/>
    <property type="gene ID" value="ENSG00000100412.17"/>
</dbReference>
<dbReference type="GeneID" id="50"/>
<dbReference type="KEGG" id="hsa:50"/>
<dbReference type="MANE-Select" id="ENST00000216254.9">
    <property type="protein sequence ID" value="ENSP00000216254.4"/>
    <property type="RefSeq nucleotide sequence ID" value="NM_001098.3"/>
    <property type="RefSeq protein sequence ID" value="NP_001089.1"/>
</dbReference>
<dbReference type="UCSC" id="uc003bac.3">
    <property type="organism name" value="human"/>
</dbReference>
<dbReference type="AGR" id="HGNC:118"/>
<dbReference type="CTD" id="50"/>
<dbReference type="DisGeNET" id="50"/>
<dbReference type="GeneCards" id="ACO2"/>
<dbReference type="HGNC" id="HGNC:118">
    <property type="gene designation" value="ACO2"/>
</dbReference>
<dbReference type="HPA" id="ENSG00000100412">
    <property type="expression patterns" value="Tissue enhanced (heart muscle, skeletal muscle, tongue)"/>
</dbReference>
<dbReference type="MalaCards" id="ACO2"/>
<dbReference type="MIM" id="100850">
    <property type="type" value="gene"/>
</dbReference>
<dbReference type="MIM" id="614559">
    <property type="type" value="phenotype"/>
</dbReference>
<dbReference type="MIM" id="616289">
    <property type="type" value="phenotype"/>
</dbReference>
<dbReference type="neXtProt" id="NX_Q99798"/>
<dbReference type="OpenTargets" id="ENSG00000100412"/>
<dbReference type="Orphanet" id="98676">
    <property type="disease" value="Autosomal recessive isolated optic atrophy"/>
</dbReference>
<dbReference type="Orphanet" id="313850">
    <property type="disease" value="Infantile cerebellar-retinal degeneration"/>
</dbReference>
<dbReference type="PharmGKB" id="PA24443"/>
<dbReference type="VEuPathDB" id="HostDB:ENSG00000100412"/>
<dbReference type="eggNOG" id="KOG0453">
    <property type="taxonomic scope" value="Eukaryota"/>
</dbReference>
<dbReference type="GeneTree" id="ENSGT00940000154892"/>
<dbReference type="HOGENOM" id="CLU_006714_2_2_1"/>
<dbReference type="InParanoid" id="Q99798"/>
<dbReference type="OrthoDB" id="2224430at2759"/>
<dbReference type="PAN-GO" id="Q99798">
    <property type="GO annotations" value="5 GO annotations based on evolutionary models"/>
</dbReference>
<dbReference type="PhylomeDB" id="Q99798"/>
<dbReference type="TreeFam" id="TF300627"/>
<dbReference type="BioCyc" id="MetaCyc:HS02077-MONOMER"/>
<dbReference type="BRENDA" id="4.2.1.3">
    <property type="organism ID" value="2681"/>
</dbReference>
<dbReference type="PathwayCommons" id="Q99798"/>
<dbReference type="Reactome" id="R-HSA-1268020">
    <property type="pathway name" value="Mitochondrial protein import"/>
</dbReference>
<dbReference type="Reactome" id="R-HSA-71403">
    <property type="pathway name" value="Citric acid cycle (TCA cycle)"/>
</dbReference>
<dbReference type="Reactome" id="R-HSA-9837999">
    <property type="pathway name" value="Mitochondrial protein degradation"/>
</dbReference>
<dbReference type="Reactome" id="R-HSA-9854311">
    <property type="pathway name" value="Maturation of TCA enzymes and regulation of TCA cycle"/>
</dbReference>
<dbReference type="SignaLink" id="Q99798"/>
<dbReference type="SIGNOR" id="Q99798"/>
<dbReference type="UniPathway" id="UPA00223">
    <property type="reaction ID" value="UER00718"/>
</dbReference>
<dbReference type="BioGRID-ORCS" id="50">
    <property type="hits" value="406 hits in 1181 CRISPR screens"/>
</dbReference>
<dbReference type="CD-CODE" id="FB4E32DD">
    <property type="entry name" value="Presynaptic clusters and postsynaptic densities"/>
</dbReference>
<dbReference type="ChiTaRS" id="ACO2">
    <property type="organism name" value="human"/>
</dbReference>
<dbReference type="GenomeRNAi" id="50"/>
<dbReference type="Pharos" id="Q99798">
    <property type="development level" value="Tbio"/>
</dbReference>
<dbReference type="PRO" id="PR:Q99798"/>
<dbReference type="Proteomes" id="UP000005640">
    <property type="component" value="Chromosome 22"/>
</dbReference>
<dbReference type="RNAct" id="Q99798">
    <property type="molecule type" value="protein"/>
</dbReference>
<dbReference type="Bgee" id="ENSG00000100412">
    <property type="expression patterns" value="Expressed in heart right ventricle and 201 other cell types or tissues"/>
</dbReference>
<dbReference type="ExpressionAtlas" id="Q99798">
    <property type="expression patterns" value="baseline and differential"/>
</dbReference>
<dbReference type="GO" id="GO:0005829">
    <property type="term" value="C:cytosol"/>
    <property type="evidence" value="ECO:0000318"/>
    <property type="project" value="GO_Central"/>
</dbReference>
<dbReference type="GO" id="GO:0005759">
    <property type="term" value="C:mitochondrial matrix"/>
    <property type="evidence" value="ECO:0000304"/>
    <property type="project" value="Reactome"/>
</dbReference>
<dbReference type="GO" id="GO:0005739">
    <property type="term" value="C:mitochondrion"/>
    <property type="evidence" value="ECO:0007005"/>
    <property type="project" value="UniProtKB"/>
</dbReference>
<dbReference type="GO" id="GO:0051539">
    <property type="term" value="F:4 iron, 4 sulfur cluster binding"/>
    <property type="evidence" value="ECO:0000318"/>
    <property type="project" value="GO_Central"/>
</dbReference>
<dbReference type="GO" id="GO:0003994">
    <property type="term" value="F:aconitate hydratase activity"/>
    <property type="evidence" value="ECO:0000318"/>
    <property type="project" value="GO_Central"/>
</dbReference>
<dbReference type="GO" id="GO:0005506">
    <property type="term" value="F:iron ion binding"/>
    <property type="evidence" value="ECO:0000314"/>
    <property type="project" value="MGI"/>
</dbReference>
<dbReference type="GO" id="GO:0006101">
    <property type="term" value="P:citrate metabolic process"/>
    <property type="evidence" value="ECO:0000314"/>
    <property type="project" value="MGI"/>
</dbReference>
<dbReference type="GO" id="GO:0006091">
    <property type="term" value="P:generation of precursor metabolites and energy"/>
    <property type="evidence" value="ECO:0000304"/>
    <property type="project" value="ProtInc"/>
</dbReference>
<dbReference type="GO" id="GO:0006099">
    <property type="term" value="P:tricarboxylic acid cycle"/>
    <property type="evidence" value="ECO:0000314"/>
    <property type="project" value="MGI"/>
</dbReference>
<dbReference type="CDD" id="cd01578">
    <property type="entry name" value="AcnA_Mitochon_Swivel"/>
    <property type="match status" value="1"/>
</dbReference>
<dbReference type="CDD" id="cd01584">
    <property type="entry name" value="AcnA_Mitochondrial"/>
    <property type="match status" value="1"/>
</dbReference>
<dbReference type="FunFam" id="3.20.19.10:FF:000002">
    <property type="entry name" value="Aconitate hydratase, mitochondrial"/>
    <property type="match status" value="1"/>
</dbReference>
<dbReference type="FunFam" id="3.30.499.10:FF:000003">
    <property type="entry name" value="Aconitate hydratase, mitochondrial"/>
    <property type="match status" value="1"/>
</dbReference>
<dbReference type="FunFam" id="3.30.499.10:FF:000004">
    <property type="entry name" value="Aconitate hydratase, mitochondrial"/>
    <property type="match status" value="1"/>
</dbReference>
<dbReference type="FunFam" id="3.40.1060.10:FF:000001">
    <property type="entry name" value="Aconitate hydratase, mitochondrial"/>
    <property type="match status" value="1"/>
</dbReference>
<dbReference type="Gene3D" id="3.40.1060.10">
    <property type="entry name" value="Aconitase, Domain 2"/>
    <property type="match status" value="1"/>
</dbReference>
<dbReference type="Gene3D" id="3.30.499.10">
    <property type="entry name" value="Aconitase, domain 3"/>
    <property type="match status" value="2"/>
</dbReference>
<dbReference type="Gene3D" id="3.20.19.10">
    <property type="entry name" value="Aconitase, domain 4"/>
    <property type="match status" value="1"/>
</dbReference>
<dbReference type="InterPro" id="IPR015931">
    <property type="entry name" value="Acnase/IPM_dHydase_lsu_aba_1/3"/>
</dbReference>
<dbReference type="InterPro" id="IPR001030">
    <property type="entry name" value="Acoase/IPM_deHydtase_lsu_aba"/>
</dbReference>
<dbReference type="InterPro" id="IPR015928">
    <property type="entry name" value="Aconitase/3IPM_dehydase_swvl"/>
</dbReference>
<dbReference type="InterPro" id="IPR050926">
    <property type="entry name" value="Aconitase/IPM_isomerase"/>
</dbReference>
<dbReference type="InterPro" id="IPR018136">
    <property type="entry name" value="Aconitase_4Fe-4S_BS"/>
</dbReference>
<dbReference type="InterPro" id="IPR036008">
    <property type="entry name" value="Aconitase_4Fe-4S_dom"/>
</dbReference>
<dbReference type="InterPro" id="IPR015932">
    <property type="entry name" value="Aconitase_dom2"/>
</dbReference>
<dbReference type="InterPro" id="IPR006248">
    <property type="entry name" value="Aconitase_mito-like"/>
</dbReference>
<dbReference type="InterPro" id="IPR000573">
    <property type="entry name" value="AconitaseA/IPMdHydase_ssu_swvl"/>
</dbReference>
<dbReference type="NCBIfam" id="TIGR01340">
    <property type="entry name" value="aconitase_mito"/>
    <property type="match status" value="1"/>
</dbReference>
<dbReference type="NCBIfam" id="NF005558">
    <property type="entry name" value="PRK07229.1"/>
    <property type="match status" value="1"/>
</dbReference>
<dbReference type="PANTHER" id="PTHR43160">
    <property type="entry name" value="ACONITATE HYDRATASE B"/>
    <property type="match status" value="1"/>
</dbReference>
<dbReference type="PANTHER" id="PTHR43160:SF3">
    <property type="entry name" value="ACONITATE HYDRATASE, MITOCHONDRIAL"/>
    <property type="match status" value="1"/>
</dbReference>
<dbReference type="Pfam" id="PF00330">
    <property type="entry name" value="Aconitase"/>
    <property type="match status" value="1"/>
</dbReference>
<dbReference type="Pfam" id="PF00694">
    <property type="entry name" value="Aconitase_C"/>
    <property type="match status" value="1"/>
</dbReference>
<dbReference type="PRINTS" id="PR00415">
    <property type="entry name" value="ACONITASE"/>
</dbReference>
<dbReference type="SUPFAM" id="SSF53732">
    <property type="entry name" value="Aconitase iron-sulfur domain"/>
    <property type="match status" value="1"/>
</dbReference>
<dbReference type="SUPFAM" id="SSF52016">
    <property type="entry name" value="LeuD/IlvD-like"/>
    <property type="match status" value="1"/>
</dbReference>
<dbReference type="PROSITE" id="PS00450">
    <property type="entry name" value="ACONITASE_1"/>
    <property type="match status" value="1"/>
</dbReference>
<dbReference type="PROSITE" id="PS01244">
    <property type="entry name" value="ACONITASE_2"/>
    <property type="match status" value="1"/>
</dbReference>
<name>ACON_HUMAN</name>
<reference key="1">
    <citation type="submission" date="1996-12" db="EMBL/GenBank/DDBJ databases">
        <title>Cloning and structural characterization of human mitochondrial aconitase.</title>
        <authorList>
            <person name="Juang H.H."/>
            <person name="Chiou B."/>
        </authorList>
    </citation>
    <scope>NUCLEOTIDE SEQUENCE [MRNA]</scope>
    <source>
        <tissue>Skeletal muscle</tissue>
    </source>
</reference>
<reference key="2">
    <citation type="journal article" date="1998" name="Gene">
        <title>Characterization of the human mitochondrial aconitase gene (ACO2).</title>
        <authorList>
            <person name="Mirel D.B."/>
            <person name="Marder K."/>
            <person name="Graziano J."/>
            <person name="Freyer G."/>
            <person name="Zhao Q."/>
            <person name="Mayeux R."/>
            <person name="Wilhelmsen K.C."/>
        </authorList>
    </citation>
    <scope>NUCLEOTIDE SEQUENCE [GENOMIC DNA]</scope>
</reference>
<reference key="3">
    <citation type="journal article" date="2004" name="Genome Biol.">
        <title>A genome annotation-driven approach to cloning the human ORFeome.</title>
        <authorList>
            <person name="Collins J.E."/>
            <person name="Wright C.L."/>
            <person name="Edwards C.A."/>
            <person name="Davis M.P."/>
            <person name="Grinham J.A."/>
            <person name="Cole C.G."/>
            <person name="Goward M.E."/>
            <person name="Aguado B."/>
            <person name="Mallya M."/>
            <person name="Mokrab Y."/>
            <person name="Huckle E.J."/>
            <person name="Beare D.M."/>
            <person name="Dunham I."/>
        </authorList>
    </citation>
    <scope>NUCLEOTIDE SEQUENCE [LARGE SCALE MRNA]</scope>
</reference>
<reference key="4">
    <citation type="submission" date="2004-06" db="EMBL/GenBank/DDBJ databases">
        <title>Cloning of human full open reading frames in Gateway(TM) system entry vector (pDONR201).</title>
        <authorList>
            <person name="Halleck A."/>
            <person name="Ebert L."/>
            <person name="Mkoundinya M."/>
            <person name="Schick M."/>
            <person name="Eisenstein S."/>
            <person name="Neubert P."/>
            <person name="Kstrang K."/>
            <person name="Schatten R."/>
            <person name="Shen B."/>
            <person name="Henze S."/>
            <person name="Mar W."/>
            <person name="Korn B."/>
            <person name="Zuo D."/>
            <person name="Hu Y."/>
            <person name="LaBaer J."/>
        </authorList>
    </citation>
    <scope>NUCLEOTIDE SEQUENCE [LARGE SCALE MRNA]</scope>
</reference>
<reference key="5">
    <citation type="journal article" date="1999" name="Nature">
        <title>The DNA sequence of human chromosome 22.</title>
        <authorList>
            <person name="Dunham I."/>
            <person name="Hunt A.R."/>
            <person name="Collins J.E."/>
            <person name="Bruskiewich R."/>
            <person name="Beare D.M."/>
            <person name="Clamp M."/>
            <person name="Smink L.J."/>
            <person name="Ainscough R."/>
            <person name="Almeida J.P."/>
            <person name="Babbage A.K."/>
            <person name="Bagguley C."/>
            <person name="Bailey J."/>
            <person name="Barlow K.F."/>
            <person name="Bates K.N."/>
            <person name="Beasley O.P."/>
            <person name="Bird C.P."/>
            <person name="Blakey S.E."/>
            <person name="Bridgeman A.M."/>
            <person name="Buck D."/>
            <person name="Burgess J."/>
            <person name="Burrill W.D."/>
            <person name="Burton J."/>
            <person name="Carder C."/>
            <person name="Carter N.P."/>
            <person name="Chen Y."/>
            <person name="Clark G."/>
            <person name="Clegg S.M."/>
            <person name="Cobley V.E."/>
            <person name="Cole C.G."/>
            <person name="Collier R.E."/>
            <person name="Connor R."/>
            <person name="Conroy D."/>
            <person name="Corby N.R."/>
            <person name="Coville G.J."/>
            <person name="Cox A.V."/>
            <person name="Davis J."/>
            <person name="Dawson E."/>
            <person name="Dhami P.D."/>
            <person name="Dockree C."/>
            <person name="Dodsworth S.J."/>
            <person name="Durbin R.M."/>
            <person name="Ellington A.G."/>
            <person name="Evans K.L."/>
            <person name="Fey J.M."/>
            <person name="Fleming K."/>
            <person name="French L."/>
            <person name="Garner A.A."/>
            <person name="Gilbert J.G.R."/>
            <person name="Goward M.E."/>
            <person name="Grafham D.V."/>
            <person name="Griffiths M.N.D."/>
            <person name="Hall C."/>
            <person name="Hall R.E."/>
            <person name="Hall-Tamlyn G."/>
            <person name="Heathcott R.W."/>
            <person name="Ho S."/>
            <person name="Holmes S."/>
            <person name="Hunt S.E."/>
            <person name="Jones M.C."/>
            <person name="Kershaw J."/>
            <person name="Kimberley A.M."/>
            <person name="King A."/>
            <person name="Laird G.K."/>
            <person name="Langford C.F."/>
            <person name="Leversha M.A."/>
            <person name="Lloyd C."/>
            <person name="Lloyd D.M."/>
            <person name="Martyn I.D."/>
            <person name="Mashreghi-Mohammadi M."/>
            <person name="Matthews L.H."/>
            <person name="Mccann O.T."/>
            <person name="Mcclay J."/>
            <person name="Mclaren S."/>
            <person name="McMurray A.A."/>
            <person name="Milne S.A."/>
            <person name="Mortimore B.J."/>
            <person name="Odell C.N."/>
            <person name="Pavitt R."/>
            <person name="Pearce A.V."/>
            <person name="Pearson D."/>
            <person name="Phillimore B.J.C.T."/>
            <person name="Phillips S.H."/>
            <person name="Plumb R.W."/>
            <person name="Ramsay H."/>
            <person name="Ramsey Y."/>
            <person name="Rogers L."/>
            <person name="Ross M.T."/>
            <person name="Scott C.E."/>
            <person name="Sehra H.K."/>
            <person name="Skuce C.D."/>
            <person name="Smalley S."/>
            <person name="Smith M.L."/>
            <person name="Soderlund C."/>
            <person name="Spragon L."/>
            <person name="Steward C.A."/>
            <person name="Sulston J.E."/>
            <person name="Swann R.M."/>
            <person name="Vaudin M."/>
            <person name="Wall M."/>
            <person name="Wallis J.M."/>
            <person name="Whiteley M.N."/>
            <person name="Willey D.L."/>
            <person name="Williams L."/>
            <person name="Williams S.A."/>
            <person name="Williamson H."/>
            <person name="Wilmer T.E."/>
            <person name="Wilming L."/>
            <person name="Wright C.L."/>
            <person name="Hubbard T."/>
            <person name="Bentley D.R."/>
            <person name="Beck S."/>
            <person name="Rogers J."/>
            <person name="Shimizu N."/>
            <person name="Minoshima S."/>
            <person name="Kawasaki K."/>
            <person name="Sasaki T."/>
            <person name="Asakawa S."/>
            <person name="Kudoh J."/>
            <person name="Shintani A."/>
            <person name="Shibuya K."/>
            <person name="Yoshizaki Y."/>
            <person name="Aoki N."/>
            <person name="Mitsuyama S."/>
            <person name="Roe B.A."/>
            <person name="Chen F."/>
            <person name="Chu L."/>
            <person name="Crabtree J."/>
            <person name="Deschamps S."/>
            <person name="Do A."/>
            <person name="Do T."/>
            <person name="Dorman A."/>
            <person name="Fang F."/>
            <person name="Fu Y."/>
            <person name="Hu P."/>
            <person name="Hua A."/>
            <person name="Kenton S."/>
            <person name="Lai H."/>
            <person name="Lao H.I."/>
            <person name="Lewis J."/>
            <person name="Lewis S."/>
            <person name="Lin S.-P."/>
            <person name="Loh P."/>
            <person name="Malaj E."/>
            <person name="Nguyen T."/>
            <person name="Pan H."/>
            <person name="Phan S."/>
            <person name="Qi S."/>
            <person name="Qian Y."/>
            <person name="Ray L."/>
            <person name="Ren Q."/>
            <person name="Shaull S."/>
            <person name="Sloan D."/>
            <person name="Song L."/>
            <person name="Wang Q."/>
            <person name="Wang Y."/>
            <person name="Wang Z."/>
            <person name="White J."/>
            <person name="Willingham D."/>
            <person name="Wu H."/>
            <person name="Yao Z."/>
            <person name="Zhan M."/>
            <person name="Zhang G."/>
            <person name="Chissoe S."/>
            <person name="Murray J."/>
            <person name="Miller N."/>
            <person name="Minx P."/>
            <person name="Fulton R."/>
            <person name="Johnson D."/>
            <person name="Bemis G."/>
            <person name="Bentley D."/>
            <person name="Bradshaw H."/>
            <person name="Bourne S."/>
            <person name="Cordes M."/>
            <person name="Du Z."/>
            <person name="Fulton L."/>
            <person name="Goela D."/>
            <person name="Graves T."/>
            <person name="Hawkins J."/>
            <person name="Hinds K."/>
            <person name="Kemp K."/>
            <person name="Latreille P."/>
            <person name="Layman D."/>
            <person name="Ozersky P."/>
            <person name="Rohlfing T."/>
            <person name="Scheet P."/>
            <person name="Walker C."/>
            <person name="Wamsley A."/>
            <person name="Wohldmann P."/>
            <person name="Pepin K."/>
            <person name="Nelson J."/>
            <person name="Korf I."/>
            <person name="Bedell J.A."/>
            <person name="Hillier L.W."/>
            <person name="Mardis E."/>
            <person name="Waterston R."/>
            <person name="Wilson R."/>
            <person name="Emanuel B.S."/>
            <person name="Shaikh T."/>
            <person name="Kurahashi H."/>
            <person name="Saitta S."/>
            <person name="Budarf M.L."/>
            <person name="McDermid H.E."/>
            <person name="Johnson A."/>
            <person name="Wong A.C.C."/>
            <person name="Morrow B.E."/>
            <person name="Edelmann L."/>
            <person name="Kim U.J."/>
            <person name="Shizuya H."/>
            <person name="Simon M.I."/>
            <person name="Dumanski J.P."/>
            <person name="Peyrard M."/>
            <person name="Kedra D."/>
            <person name="Seroussi E."/>
            <person name="Fransson I."/>
            <person name="Tapia I."/>
            <person name="Bruder C.E."/>
            <person name="O'Brien K.P."/>
            <person name="Wilkinson P."/>
            <person name="Bodenteich A."/>
            <person name="Hartman K."/>
            <person name="Hu X."/>
            <person name="Khan A.S."/>
            <person name="Lane L."/>
            <person name="Tilahun Y."/>
            <person name="Wright H."/>
        </authorList>
    </citation>
    <scope>NUCLEOTIDE SEQUENCE [LARGE SCALE GENOMIC DNA]</scope>
</reference>
<reference key="6">
    <citation type="journal article" date="2004" name="Genome Res.">
        <title>The status, quality, and expansion of the NIH full-length cDNA project: the Mammalian Gene Collection (MGC).</title>
        <authorList>
            <consortium name="The MGC Project Team"/>
        </authorList>
    </citation>
    <scope>NUCLEOTIDE SEQUENCE [LARGE SCALE MRNA]</scope>
    <source>
        <tissue>Brain</tissue>
        <tissue>Uterus</tissue>
    </source>
</reference>
<reference key="7">
    <citation type="submission" date="2008-12" db="UniProtKB">
        <authorList>
            <person name="Lubec G."/>
            <person name="Afjehi-Sadat L."/>
            <person name="Chen W.-Q."/>
            <person name="Sun Y."/>
        </authorList>
    </citation>
    <scope>PROTEIN SEQUENCE OF 69-84; 234-245; 313-323; 379-395; 412-424; 430-437; 507-520; 565-573; 608-628; 634-648 AND 657-671</scope>
    <scope>IDENTIFICATION BY MASS SPECTROMETRY</scope>
    <source>
        <tissue>Brain</tissue>
        <tissue>Cajal-Retzius cell</tissue>
        <tissue>Fetal brain cortex</tissue>
    </source>
</reference>
<reference key="8">
    <citation type="journal article" date="1991" name="Protein Seq. Data Anal.">
        <title>Purification and partial amino acid sequence of human aconitase.</title>
        <authorList>
            <person name="Baldwin G.S."/>
            <person name="Seet K.L."/>
            <person name="Callaghan J."/>
            <person name="Toncich G."/>
            <person name="Toh B.H."/>
            <person name="Moritz R.L."/>
            <person name="Rubira M.R."/>
            <person name="Simpson R."/>
        </authorList>
    </citation>
    <scope>PROTEIN SEQUENCE OF 69-83; 96-107; 371-396 AND 524-534</scope>
</reference>
<reference key="9">
    <citation type="journal article" date="2009" name="Science">
        <title>Lysine acetylation targets protein complexes and co-regulates major cellular functions.</title>
        <authorList>
            <person name="Choudhary C."/>
            <person name="Kumar C."/>
            <person name="Gnad F."/>
            <person name="Nielsen M.L."/>
            <person name="Rehman M."/>
            <person name="Walther T.C."/>
            <person name="Olsen J.V."/>
            <person name="Mann M."/>
        </authorList>
    </citation>
    <scope>ACETYLATION [LARGE SCALE ANALYSIS] AT LYS-573 AND LYS-605</scope>
    <scope>IDENTIFICATION BY MASS SPECTROMETRY [LARGE SCALE ANALYSIS]</scope>
</reference>
<reference key="10">
    <citation type="journal article" date="2010" name="Sci. Signal.">
        <title>Quantitative phosphoproteomics reveals widespread full phosphorylation site occupancy during mitosis.</title>
        <authorList>
            <person name="Olsen J.V."/>
            <person name="Vermeulen M."/>
            <person name="Santamaria A."/>
            <person name="Kumar C."/>
            <person name="Miller M.L."/>
            <person name="Jensen L.J."/>
            <person name="Gnad F."/>
            <person name="Cox J."/>
            <person name="Jensen T.S."/>
            <person name="Nigg E.A."/>
            <person name="Brunak S."/>
            <person name="Mann M."/>
        </authorList>
    </citation>
    <scope>PHOSPHORYLATION [LARGE SCALE ANALYSIS] AT SER-559</scope>
    <scope>IDENTIFICATION BY MASS SPECTROMETRY [LARGE SCALE ANALYSIS]</scope>
    <source>
        <tissue>Cervix carcinoma</tissue>
    </source>
</reference>
<reference key="11">
    <citation type="journal article" date="2011" name="BMC Syst. Biol.">
        <title>Initial characterization of the human central proteome.</title>
        <authorList>
            <person name="Burkard T.R."/>
            <person name="Planyavsky M."/>
            <person name="Kaupe I."/>
            <person name="Breitwieser F.P."/>
            <person name="Buerckstuemmer T."/>
            <person name="Bennett K.L."/>
            <person name="Superti-Furga G."/>
            <person name="Colinge J."/>
        </authorList>
    </citation>
    <scope>IDENTIFICATION BY MASS SPECTROMETRY [LARGE SCALE ANALYSIS]</scope>
</reference>
<reference key="12">
    <citation type="journal article" date="2013" name="J. Proteome Res.">
        <title>Toward a comprehensive characterization of a human cancer cell phosphoproteome.</title>
        <authorList>
            <person name="Zhou H."/>
            <person name="Di Palma S."/>
            <person name="Preisinger C."/>
            <person name="Peng M."/>
            <person name="Polat A.N."/>
            <person name="Heck A.J."/>
            <person name="Mohammed S."/>
        </authorList>
    </citation>
    <scope>PHOSPHORYLATION [LARGE SCALE ANALYSIS] AT SER-559</scope>
    <scope>IDENTIFICATION BY MASS SPECTROMETRY [LARGE SCALE ANALYSIS]</scope>
    <source>
        <tissue>Erythroleukemia</tissue>
    </source>
</reference>
<reference key="13">
    <citation type="journal article" date="2014" name="J. Med. Genet.">
        <title>Mutations in the tricarboxylic acid cycle enzyme, aconitase 2, cause either isolated or syndromic optic neuropathy with encephalopathy and cerebellar atrophy.</title>
        <authorList>
            <person name="Metodiev M.D."/>
            <person name="Gerber S."/>
            <person name="Hubert L."/>
            <person name="Delahodde A."/>
            <person name="Chretien D."/>
            <person name="Gerard X."/>
            <person name="Amati-Bonneau P."/>
            <person name="Giacomotto M.C."/>
            <person name="Boddaert N."/>
            <person name="Kaminska A."/>
            <person name="Desguerre I."/>
            <person name="Amiel J."/>
            <person name="Rio M."/>
            <person name="Kaplan J."/>
            <person name="Munnich A."/>
            <person name="Rotig A."/>
            <person name="Rozet J.M."/>
            <person name="Besmond C."/>
        </authorList>
    </citation>
    <scope>INVOLVEMENT IN OPA9</scope>
    <scope>INVOLVEMENT IN ICRD</scope>
    <scope>VARIANTS OPA9 VAL-74 AND ARG-661</scope>
    <scope>VARIANTS ICRD ASP-259 AND ASN-736</scope>
</reference>
<reference key="14">
    <citation type="journal article" date="2014" name="J. Proteomics">
        <title>An enzyme assisted RP-RPLC approach for in-depth analysis of human liver phosphoproteome.</title>
        <authorList>
            <person name="Bian Y."/>
            <person name="Song C."/>
            <person name="Cheng K."/>
            <person name="Dong M."/>
            <person name="Wang F."/>
            <person name="Huang J."/>
            <person name="Sun D."/>
            <person name="Wang L."/>
            <person name="Ye M."/>
            <person name="Zou H."/>
        </authorList>
    </citation>
    <scope>IDENTIFICATION BY MASS SPECTROMETRY [LARGE SCALE ANALYSIS]</scope>
    <source>
        <tissue>Liver</tissue>
    </source>
</reference>
<reference key="15">
    <citation type="journal article" date="2015" name="Proteomics">
        <title>N-terminome analysis of the human mitochondrial proteome.</title>
        <authorList>
            <person name="Vaca Jacome A.S."/>
            <person name="Rabilloud T."/>
            <person name="Schaeffer-Reiss C."/>
            <person name="Rompais M."/>
            <person name="Ayoub D."/>
            <person name="Lane L."/>
            <person name="Bairoch A."/>
            <person name="Van Dorsselaer A."/>
            <person name="Carapito C."/>
        </authorList>
    </citation>
    <scope>IDENTIFICATION BY MASS SPECTROMETRY [LARGE SCALE ANALYSIS]</scope>
</reference>
<reference key="16">
    <citation type="journal article" date="2006" name="Science">
        <title>The consensus coding sequences of human breast and colorectal cancers.</title>
        <authorList>
            <person name="Sjoeblom T."/>
            <person name="Jones S."/>
            <person name="Wood L.D."/>
            <person name="Parsons D.W."/>
            <person name="Lin J."/>
            <person name="Barber T.D."/>
            <person name="Mandelker D."/>
            <person name="Leary R.J."/>
            <person name="Ptak J."/>
            <person name="Silliman N."/>
            <person name="Szabo S."/>
            <person name="Buckhaults P."/>
            <person name="Farrell C."/>
            <person name="Meeh P."/>
            <person name="Markowitz S.D."/>
            <person name="Willis J."/>
            <person name="Dawson D."/>
            <person name="Willson J.K.V."/>
            <person name="Gazdar A.F."/>
            <person name="Hartigan J."/>
            <person name="Wu L."/>
            <person name="Liu C."/>
            <person name="Parmigiani G."/>
            <person name="Park B.H."/>
            <person name="Bachman K.E."/>
            <person name="Papadopoulos N."/>
            <person name="Vogelstein B."/>
            <person name="Kinzler K.W."/>
            <person name="Velculescu V.E."/>
        </authorList>
    </citation>
    <scope>VARIANT [LARGE SCALE ANALYSIS] ASN-697</scope>
</reference>
<reference key="17">
    <citation type="journal article" date="2012" name="Am. J. Hum. Genet.">
        <title>Infantile cerebellar-retinal degeneration associated with a mutation in mitochondrial aconitase, ACO2.</title>
        <authorList>
            <person name="Spiegel R."/>
            <person name="Pines O."/>
            <person name="Ta-Shma A."/>
            <person name="Burak E."/>
            <person name="Shaag A."/>
            <person name="Halvardson J."/>
            <person name="Edvardson S."/>
            <person name="Mahajna M."/>
            <person name="Zenvirt S."/>
            <person name="Saada A."/>
            <person name="Shalev S."/>
            <person name="Feuk L."/>
            <person name="Elpeleg O."/>
        </authorList>
    </citation>
    <scope>VARIANT ICRD ARG-112</scope>
    <scope>CHARACTERIZATION OF VARIANT ICRD ARG-112</scope>
</reference>
<feature type="transit peptide" description="Mitochondrion" evidence="1">
    <location>
        <begin position="1"/>
        <end position="27"/>
    </location>
</feature>
<feature type="chain" id="PRO_0000000541" description="Aconitate hydratase, mitochondrial">
    <location>
        <begin position="28"/>
        <end position="780"/>
    </location>
</feature>
<feature type="region of interest" description="Disordered" evidence="5">
    <location>
        <begin position="528"/>
        <end position="560"/>
    </location>
</feature>
<feature type="compositionally biased region" description="Basic and acidic residues" evidence="5">
    <location>
        <begin position="528"/>
        <end position="537"/>
    </location>
</feature>
<feature type="compositionally biased region" description="Polar residues" evidence="5">
    <location>
        <begin position="551"/>
        <end position="560"/>
    </location>
</feature>
<feature type="binding site" evidence="1">
    <location>
        <position position="99"/>
    </location>
    <ligand>
        <name>substrate</name>
    </ligand>
</feature>
<feature type="binding site" evidence="1">
    <location>
        <begin position="192"/>
        <end position="194"/>
    </location>
    <ligand>
        <name>substrate</name>
    </ligand>
</feature>
<feature type="binding site" evidence="1">
    <location>
        <position position="385"/>
    </location>
    <ligand>
        <name>[4Fe-4S] cluster</name>
        <dbReference type="ChEBI" id="CHEBI:49883"/>
    </ligand>
</feature>
<feature type="binding site" evidence="1">
    <location>
        <position position="448"/>
    </location>
    <ligand>
        <name>[4Fe-4S] cluster</name>
        <dbReference type="ChEBI" id="CHEBI:49883"/>
    </ligand>
</feature>
<feature type="binding site" evidence="1">
    <location>
        <position position="451"/>
    </location>
    <ligand>
        <name>[4Fe-4S] cluster</name>
        <dbReference type="ChEBI" id="CHEBI:49883"/>
    </ligand>
</feature>
<feature type="binding site" evidence="1">
    <location>
        <position position="474"/>
    </location>
    <ligand>
        <name>substrate</name>
    </ligand>
</feature>
<feature type="binding site" evidence="1">
    <location>
        <position position="479"/>
    </location>
    <ligand>
        <name>substrate</name>
    </ligand>
</feature>
<feature type="binding site" evidence="1">
    <location>
        <position position="607"/>
    </location>
    <ligand>
        <name>substrate</name>
    </ligand>
</feature>
<feature type="binding site" evidence="1">
    <location>
        <begin position="670"/>
        <end position="671"/>
    </location>
    <ligand>
        <name>substrate</name>
    </ligand>
</feature>
<feature type="modified residue" description="N6-succinyllysine" evidence="3">
    <location>
        <position position="31"/>
    </location>
</feature>
<feature type="modified residue" description="N6-acetyllysine; alternate" evidence="3">
    <location>
        <position position="50"/>
    </location>
</feature>
<feature type="modified residue" description="N6-succinyllysine; alternate" evidence="3">
    <location>
        <position position="50"/>
    </location>
</feature>
<feature type="modified residue" description="N6-acetyllysine; alternate" evidence="3">
    <location>
        <position position="138"/>
    </location>
</feature>
<feature type="modified residue" description="N6-succinyllysine; alternate" evidence="3">
    <location>
        <position position="138"/>
    </location>
</feature>
<feature type="modified residue" description="N6-acetyllysine; alternate" evidence="3">
    <location>
        <position position="144"/>
    </location>
</feature>
<feature type="modified residue" description="N6-succinyllysine; alternate" evidence="3">
    <location>
        <position position="144"/>
    </location>
</feature>
<feature type="modified residue" description="N6-acetyllysine; alternate" evidence="3">
    <location>
        <position position="233"/>
    </location>
</feature>
<feature type="modified residue" description="N6-succinyllysine; alternate" evidence="3">
    <location>
        <position position="233"/>
    </location>
</feature>
<feature type="modified residue" description="N6-succinyllysine" evidence="3">
    <location>
        <position position="411"/>
    </location>
</feature>
<feature type="modified residue" description="N6-succinyllysine" evidence="3">
    <location>
        <position position="549"/>
    </location>
</feature>
<feature type="modified residue" description="Phosphoserine" evidence="11 12">
    <location>
        <position position="559"/>
    </location>
</feature>
<feature type="modified residue" description="N6-acetyllysine; alternate" evidence="10">
    <location>
        <position position="573"/>
    </location>
</feature>
<feature type="modified residue" description="N6-succinyllysine; alternate" evidence="3">
    <location>
        <position position="573"/>
    </location>
</feature>
<feature type="modified residue" description="N6-succinyllysine" evidence="3">
    <location>
        <position position="577"/>
    </location>
</feature>
<feature type="modified residue" description="N6-succinyllysine" evidence="3">
    <location>
        <position position="591"/>
    </location>
</feature>
<feature type="modified residue" description="N6-acetyllysine; alternate" evidence="10">
    <location>
        <position position="605"/>
    </location>
</feature>
<feature type="modified residue" description="N6-succinyllysine; alternate" evidence="3">
    <location>
        <position position="605"/>
    </location>
</feature>
<feature type="modified residue" description="N6-succinyllysine" evidence="3">
    <location>
        <position position="628"/>
    </location>
</feature>
<feature type="modified residue" description="Phosphoserine" evidence="3">
    <location>
        <position position="670"/>
    </location>
</feature>
<feature type="modified residue" description="N6-succinyllysine" evidence="3">
    <location>
        <position position="689"/>
    </location>
</feature>
<feature type="modified residue" description="N6-acetyllysine; alternate" evidence="3">
    <location>
        <position position="723"/>
    </location>
</feature>
<feature type="modified residue" description="N6-succinyllysine; alternate" evidence="3">
    <location>
        <position position="723"/>
    </location>
</feature>
<feature type="modified residue" description="N6-acetyllysine; alternate" evidence="3">
    <location>
        <position position="730"/>
    </location>
</feature>
<feature type="modified residue" description="N6-succinyllysine; alternate" evidence="3">
    <location>
        <position position="730"/>
    </location>
</feature>
<feature type="modified residue" description="N6-acetyllysine" evidence="3">
    <location>
        <position position="736"/>
    </location>
</feature>
<feature type="modified residue" description="N6-acetyllysine" evidence="3">
    <location>
        <position position="739"/>
    </location>
</feature>
<feature type="modified residue" description="N6-acetyllysine" evidence="3">
    <location>
        <position position="743"/>
    </location>
</feature>
<feature type="sequence variant" id="VAR_073435" description="In OPA9; dbSNP:rs141772938." evidence="8">
    <original>L</original>
    <variation>V</variation>
    <location>
        <position position="74"/>
    </location>
</feature>
<feature type="sequence variant" id="VAR_067543" description="In ICRD; functional expression studies in yeast show that the mutant has decreased function under growth conditions requiring the TCA cycle and the glyoxylate shunt; dbSNP:rs786200924." evidence="7">
    <original>S</original>
    <variation>R</variation>
    <location>
        <position position="112"/>
    </location>
</feature>
<feature type="sequence variant" id="VAR_073436" description="In ICRD; dbSNP:rs786204828." evidence="8">
    <original>G</original>
    <variation>D</variation>
    <location>
        <position position="259"/>
    </location>
</feature>
<feature type="sequence variant" id="VAR_073437" description="In OPA9; dbSNP:rs752034900." evidence="8">
    <original>G</original>
    <variation>R</variation>
    <location>
        <position position="661"/>
    </location>
</feature>
<feature type="sequence variant" id="VAR_036572" description="In a breast cancer sample; somatic mutation." evidence="6">
    <original>T</original>
    <variation>N</variation>
    <location>
        <position position="697"/>
    </location>
</feature>
<feature type="sequence variant" id="VAR_073438" description="In ICRD; dbSNP:rs786204829." evidence="8">
    <original>K</original>
    <variation>N</variation>
    <location>
        <position position="736"/>
    </location>
</feature>
<feature type="sequence variant" id="VAR_033297" description="In dbSNP:rs1804785.">
    <original>A</original>
    <variation>S</variation>
    <location>
        <position position="768"/>
    </location>
</feature>
<feature type="sequence conflict" description="In Ref. 1; AAB38416." evidence="9" ref="1">
    <original>S</original>
    <variation>T</variation>
    <location>
        <position position="35"/>
    </location>
</feature>
<feature type="sequence conflict" description="In Ref. 1; AAB38416." evidence="9" ref="1">
    <original>G</original>
    <variation>D</variation>
    <location>
        <position position="136"/>
    </location>
</feature>
<feature type="sequence conflict" description="In Ref. 1; AAB38416." evidence="9" ref="1">
    <original>A</original>
    <variation>D</variation>
    <location>
        <position position="159"/>
    </location>
</feature>
<feature type="sequence conflict" description="In Ref. 1; AAB38416." evidence="9" ref="1">
    <original>K</original>
    <variation>S</variation>
    <location>
        <position position="167"/>
    </location>
</feature>
<feature type="sequence conflict" description="In Ref. 4; CAG38805." evidence="9" ref="4">
    <original>G</original>
    <variation>D</variation>
    <location>
        <position position="199"/>
    </location>
</feature>
<feature type="sequence conflict" description="In Ref. 6; AAH26196." evidence="9" ref="6">
    <original>G</original>
    <variation>R</variation>
    <location>
        <position position="207"/>
    </location>
</feature>
<feature type="sequence conflict" description="In Ref. 1; AAB38416." evidence="9" ref="1">
    <original>S</original>
    <variation>T</variation>
    <location>
        <position position="242"/>
    </location>
</feature>
<feature type="sequence conflict" description="In Ref. 6; AAH26196." evidence="9" ref="6">
    <original>P</original>
    <variation>H</variation>
    <location>
        <position position="270"/>
    </location>
</feature>
<feature type="sequence conflict" description="In Ref. 1; AAB38416." evidence="9" ref="1">
    <original>I</original>
    <variation>M</variation>
    <location>
        <position position="275"/>
    </location>
</feature>
<feature type="sequence conflict" description="In Ref. 4; CAG38805." evidence="9" ref="4">
    <original>L</original>
    <variation>P</variation>
    <location>
        <position position="444"/>
    </location>
</feature>
<feature type="sequence conflict" description="In Ref. 1; AAB38416." evidence="9" ref="1">
    <original>T</original>
    <variation>K</variation>
    <location>
        <position position="517"/>
    </location>
</feature>
<feature type="sequence conflict" description="In Ref. 1; AAB38416." evidence="9" ref="1">
    <original>G</original>
    <variation>R</variation>
    <location>
        <position position="553"/>
    </location>
</feature>
<gene>
    <name type="primary">ACO2</name>
</gene>
<protein>
    <recommendedName>
        <fullName>Aconitate hydratase, mitochondrial</fullName>
        <shortName>Aconitase</shortName>
        <ecNumber evidence="2">4.2.1.3</ecNumber>
    </recommendedName>
    <alternativeName>
        <fullName>Citrate hydro-lyase</fullName>
    </alternativeName>
</protein>
<sequence length="780" mass="85425">MAPYSLLVTRLQKALGVRQYHVASVLCQRAKVAMSHFEPNEYIHYDLLEKNINIVRKRLNRPLTLSEKIVYGHLDDPASQEIERGKSYLRLRPDRVAMQDATAQMAMLQFISSGLSKVAVPSTIHCDHLIEAQVGGEKDLRRAKDINQEVYNFLATAGAKYGVGFWKPGSGIIHQIILENYAYPGVLLIGTDSHTPNGGGLGGICIGVGGADAVDVMAGIPWELKCPKVIGVKLTGSLSGWSSPKDVILKVAGILTVKGGTGAIVEYHGPGVDSISCTGMATICNMGAEIGATTSVFPYNHRMKKYLSKTGREDIANLADEFKDHLVPDPGCHYDQLIEINLSELKPHINGPFTPDLAHPVAEVGKVAEKEGWPLDIRVGLIGSCTNSSYEDMGRSAAVAKQALAHGLKCKSQFTITPGSEQIRATIERDGYAQILRDLGGIVLANACGPCIGQWDRKDIKKGEKNTIVTSYNRNFTGRNDANPETHAFVTSPEIVTALAIAGTLKFNPETDYLTGTDGKKFRLEAPDADELPKGEFDPGQDTYQHPPKDSSGQHVDVSPTSQRLQLLEPFDKWDGKDLEDLQILIKVKGKCTTDHISAAGPWLKFRGHLDNISNNLLIGAINIENGKANSVRNAVTQEFGPVPDTARYYKKHGIRWVVIGDENYGEGSSREHAALEPRHLGGRAIITKSFARIHETNLKKQGLLPLTFADPADYNKIHPVDKLTIQGLKDFTPGKPLKCIIKHPNGTQETILLNHTFNETQIEWFRAGSALNRMKELQQ</sequence>